<organism>
    <name type="scientific">Claviceps purpurea (strain 20.1)</name>
    <name type="common">Ergot fungus</name>
    <name type="synonym">Sphacelia segetum</name>
    <dbReference type="NCBI Taxonomy" id="1111077"/>
    <lineage>
        <taxon>Eukaryota</taxon>
        <taxon>Fungi</taxon>
        <taxon>Dikarya</taxon>
        <taxon>Ascomycota</taxon>
        <taxon>Pezizomycotina</taxon>
        <taxon>Sordariomycetes</taxon>
        <taxon>Hypocreomycetidae</taxon>
        <taxon>Hypocreales</taxon>
        <taxon>Clavicipitaceae</taxon>
        <taxon>Claviceps</taxon>
    </lineage>
</organism>
<proteinExistence type="evidence at transcript level"/>
<name>PIG10_CLAP2</name>
<comment type="function">
    <text evidence="5">Transcriptional coactivator; part of the gene cluster responsible for the typical purple-black color of the ergot sclerotia (PubMed:28955461). The ergochrome gene cluster produces several ergot pigments including the yellow ergochrome secalonic acid and its derivatives, as well as the red anthraquinones endocrocin and clavorubin (PubMed:28955461). With CPUR_05433, coregulates the production of geodin (PubMed:28955461).</text>
</comment>
<comment type="subcellular location">
    <subcellularLocation>
        <location evidence="4">Nucleus</location>
    </subcellularLocation>
</comment>
<comment type="induction">
    <text evidence="2">Expression correlates with the formation of the sclerotia and thus the pigment production (PubMed:28955461).</text>
</comment>
<protein>
    <recommendedName>
        <fullName evidence="3">Ergochrome gene cluster transcriptional coactivator CPUR_05432</fullName>
    </recommendedName>
    <alternativeName>
        <fullName evidence="3">Ergochrome gene cluster protein CPUR_05432</fullName>
    </alternativeName>
</protein>
<sequence length="467" mass="50328">MEKLAALKKLPSILRPLLTSKSSYHRVPSDRPTIMDAATSEQLHGLTNRLLTEVNALVSSYSSIDCQHPFLAAACESQNDGSEARSNILSSLSEIEAIVRGPKEFLENIAIQCEMLGSIQWLGEFQILACIPLSQEVPIQDVANLSNVPEQQLAQMIGLTARCGFLIEPRRGYVAHTPLSASFVTNPSHLDAAMFLAEQAAPAALKSATATQRFTESHTNNETAFSLATTTKVPFEAAQEQSPRLSRQWAAYLHHAGGLPEDHVLADAMAKLHWSNISKAGGQVVEVGAFLAAKPLARLFPQLRFLVQLPAGASSCESILCDPSDPIKPGQISIANRVPGSPQSVTNAAVYVLHLPSSVPSQILTELQVHLPALRMSNGVMLIMSGRVLPGQDEPIRARHAAVAHARGLIMYQMSNEVEMDLSSLLQMLDTVRDSTGKLVLVHKLRSCSGMTVAVVVKYQLMAGGAS</sequence>
<gene>
    <name type="ORF">CPUR_05432</name>
</gene>
<evidence type="ECO:0000255" key="1">
    <source>
        <dbReference type="PROSITE-ProRule" id="PRU00393"/>
    </source>
</evidence>
<evidence type="ECO:0000269" key="2">
    <source>
    </source>
</evidence>
<evidence type="ECO:0000303" key="3">
    <source>
    </source>
</evidence>
<evidence type="ECO:0000305" key="4"/>
<evidence type="ECO:0000305" key="5">
    <source>
    </source>
</evidence>
<feature type="chain" id="PRO_0000443982" description="Ergochrome gene cluster transcriptional coactivator CPUR_05432">
    <location>
        <begin position="1"/>
        <end position="467"/>
    </location>
</feature>
<feature type="domain" description="HTH iclR-type" evidence="1">
    <location>
        <begin position="109"/>
        <end position="179"/>
    </location>
</feature>
<feature type="DNA-binding region" description="H-T-H motif" evidence="1">
    <location>
        <begin position="139"/>
        <end position="158"/>
    </location>
</feature>
<accession>M1WG94</accession>
<keyword id="KW-0238">DNA-binding</keyword>
<keyword id="KW-0539">Nucleus</keyword>
<keyword id="KW-1185">Reference proteome</keyword>
<reference key="1">
    <citation type="journal article" date="2013" name="PLoS Genet.">
        <title>Plant-symbiotic fungi as chemical engineers: Multi-genome analysis of the Clavicipitaceae reveals dynamics of alkaloid loci.</title>
        <authorList>
            <person name="Schardl C.L."/>
            <person name="Young C.A."/>
            <person name="Hesse U."/>
            <person name="Amyotte S.G."/>
            <person name="Andreeva K."/>
            <person name="Calie P.J."/>
            <person name="Fleetwood D.J."/>
            <person name="Haws D.C."/>
            <person name="Moore N."/>
            <person name="Oeser B."/>
            <person name="Panaccione D.G."/>
            <person name="Schweri K.K."/>
            <person name="Voisey C.R."/>
            <person name="Farman M.L."/>
            <person name="Jaromczyk J.W."/>
            <person name="Roe B.A."/>
            <person name="O'Sullivan D.M."/>
            <person name="Scott B."/>
            <person name="Tudzynski P."/>
            <person name="An Z."/>
            <person name="Arnaoudova E.G."/>
            <person name="Bullock C.T."/>
            <person name="Charlton N.D."/>
            <person name="Chen L."/>
            <person name="Cox M."/>
            <person name="Dinkins R.D."/>
            <person name="Florea S."/>
            <person name="Glenn A.E."/>
            <person name="Gordon A."/>
            <person name="Gueldener U."/>
            <person name="Harris D.R."/>
            <person name="Hollin W."/>
            <person name="Jaromczyk J."/>
            <person name="Johnson R.D."/>
            <person name="Khan A.K."/>
            <person name="Leistner E."/>
            <person name="Leuchtmann A."/>
            <person name="Li C."/>
            <person name="Liu J."/>
            <person name="Liu J."/>
            <person name="Liu M."/>
            <person name="Mace W."/>
            <person name="Machado C."/>
            <person name="Nagabhyru P."/>
            <person name="Pan J."/>
            <person name="Schmid J."/>
            <person name="Sugawara K."/>
            <person name="Steiner U."/>
            <person name="Takach J.E."/>
            <person name="Tanaka E."/>
            <person name="Webb J.S."/>
            <person name="Wilson E.V."/>
            <person name="Wiseman J.L."/>
            <person name="Yoshida R."/>
            <person name="Zeng Z."/>
        </authorList>
    </citation>
    <scope>NUCLEOTIDE SEQUENCE [LARGE SCALE GENOMIC DNA]</scope>
    <source>
        <strain>20.1</strain>
    </source>
</reference>
<reference key="2">
    <citation type="journal article" date="2016" name="Fungal Biol. Biotechnol.">
        <title>Identification and characterization of the ergochrome gene cluster in the plant pathogenic fungus Claviceps purpurea.</title>
        <authorList>
            <person name="Neubauer L."/>
            <person name="Dopstadt J."/>
            <person name="Humpf H.U."/>
            <person name="Tudzynski P."/>
        </authorList>
    </citation>
    <scope>FUNCTION</scope>
    <scope>INDUCTION</scope>
</reference>
<dbReference type="EMBL" id="CAGA01000032">
    <property type="protein sequence ID" value="CCE31579.1"/>
    <property type="molecule type" value="Genomic_DNA"/>
</dbReference>
<dbReference type="SMR" id="M1WG94"/>
<dbReference type="STRING" id="1111077.M1WG94"/>
<dbReference type="VEuPathDB" id="FungiDB:CPUR_05432"/>
<dbReference type="eggNOG" id="KOG3178">
    <property type="taxonomic scope" value="Eukaryota"/>
</dbReference>
<dbReference type="HOGENOM" id="CLU_005533_11_0_1"/>
<dbReference type="OrthoDB" id="2410195at2759"/>
<dbReference type="Proteomes" id="UP000016801">
    <property type="component" value="Unassembled WGS sequence"/>
</dbReference>
<dbReference type="GO" id="GO:0005634">
    <property type="term" value="C:nucleus"/>
    <property type="evidence" value="ECO:0007669"/>
    <property type="project" value="UniProtKB-SubCell"/>
</dbReference>
<dbReference type="GO" id="GO:0003677">
    <property type="term" value="F:DNA binding"/>
    <property type="evidence" value="ECO:0007669"/>
    <property type="project" value="UniProtKB-KW"/>
</dbReference>
<dbReference type="Gene3D" id="3.40.50.150">
    <property type="entry name" value="Vaccinia Virus protein VP39"/>
    <property type="match status" value="1"/>
</dbReference>
<dbReference type="InterPro" id="IPR029063">
    <property type="entry name" value="SAM-dependent_MTases_sf"/>
</dbReference>
<dbReference type="InterPro" id="IPR036390">
    <property type="entry name" value="WH_DNA-bd_sf"/>
</dbReference>
<dbReference type="PANTHER" id="PTHR43712:SF15">
    <property type="entry name" value="MONODICTYPHENONE CLUSTER TRANSCRIPTIONAL COACTIVATOR MDPA"/>
    <property type="match status" value="1"/>
</dbReference>
<dbReference type="PANTHER" id="PTHR43712">
    <property type="entry name" value="PUTATIVE (AFU_ORTHOLOGUE AFUA_4G14580)-RELATED"/>
    <property type="match status" value="1"/>
</dbReference>
<dbReference type="SUPFAM" id="SSF46785">
    <property type="entry name" value="Winged helix' DNA-binding domain"/>
    <property type="match status" value="1"/>
</dbReference>